<feature type="chain" id="PRO_0000138482" description="UPF0145 protein YbjQ">
    <location>
        <begin position="1"/>
        <end position="107"/>
    </location>
</feature>
<accession>P67287</accession>
<accession>Q8XGV2</accession>
<name>YBJQ_SALTI</name>
<gene>
    <name evidence="1" type="primary">ybjQ</name>
    <name type="ordered locus">STY0926</name>
    <name type="ordered locus">t2003</name>
</gene>
<evidence type="ECO:0000255" key="1">
    <source>
        <dbReference type="HAMAP-Rule" id="MF_00338"/>
    </source>
</evidence>
<protein>
    <recommendedName>
        <fullName evidence="1">UPF0145 protein YbjQ</fullName>
    </recommendedName>
</protein>
<proteinExistence type="inferred from homology"/>
<organism>
    <name type="scientific">Salmonella typhi</name>
    <dbReference type="NCBI Taxonomy" id="90370"/>
    <lineage>
        <taxon>Bacteria</taxon>
        <taxon>Pseudomonadati</taxon>
        <taxon>Pseudomonadota</taxon>
        <taxon>Gammaproteobacteria</taxon>
        <taxon>Enterobacterales</taxon>
        <taxon>Enterobacteriaceae</taxon>
        <taxon>Salmonella</taxon>
    </lineage>
</organism>
<dbReference type="EMBL" id="AL513382">
    <property type="protein sequence ID" value="CAD05332.1"/>
    <property type="molecule type" value="Genomic_DNA"/>
</dbReference>
<dbReference type="EMBL" id="AE014613">
    <property type="protein sequence ID" value="AAO69615.1"/>
    <property type="molecule type" value="Genomic_DNA"/>
</dbReference>
<dbReference type="RefSeq" id="NP_455420.1">
    <property type="nucleotide sequence ID" value="NC_003198.1"/>
</dbReference>
<dbReference type="RefSeq" id="WP_001160725.1">
    <property type="nucleotide sequence ID" value="NZ_WSUR01000019.1"/>
</dbReference>
<dbReference type="SMR" id="P67287"/>
<dbReference type="STRING" id="220341.gene:17584922"/>
<dbReference type="KEGG" id="stt:t2003"/>
<dbReference type="KEGG" id="sty:STY0926"/>
<dbReference type="PATRIC" id="fig|220341.7.peg.935"/>
<dbReference type="eggNOG" id="COG0393">
    <property type="taxonomic scope" value="Bacteria"/>
</dbReference>
<dbReference type="HOGENOM" id="CLU_117144_3_0_6"/>
<dbReference type="OMA" id="SGEAIMG"/>
<dbReference type="OrthoDB" id="9796448at2"/>
<dbReference type="Proteomes" id="UP000000541">
    <property type="component" value="Chromosome"/>
</dbReference>
<dbReference type="Proteomes" id="UP000002670">
    <property type="component" value="Chromosome"/>
</dbReference>
<dbReference type="Gene3D" id="3.30.110.70">
    <property type="entry name" value="Hypothetical protein apc22750. Chain B"/>
    <property type="match status" value="1"/>
</dbReference>
<dbReference type="HAMAP" id="MF_00338">
    <property type="entry name" value="UPF0145"/>
    <property type="match status" value="1"/>
</dbReference>
<dbReference type="InterPro" id="IPR035439">
    <property type="entry name" value="UPF0145_dom_sf"/>
</dbReference>
<dbReference type="InterPro" id="IPR002765">
    <property type="entry name" value="UPF0145_YbjQ-like"/>
</dbReference>
<dbReference type="NCBIfam" id="NF002776">
    <property type="entry name" value="PRK02877.1"/>
    <property type="match status" value="1"/>
</dbReference>
<dbReference type="PANTHER" id="PTHR34068">
    <property type="entry name" value="UPF0145 PROTEIN YBJQ"/>
    <property type="match status" value="1"/>
</dbReference>
<dbReference type="PANTHER" id="PTHR34068:SF1">
    <property type="entry name" value="UPF0145 PROTEIN YBJQ"/>
    <property type="match status" value="1"/>
</dbReference>
<dbReference type="Pfam" id="PF01906">
    <property type="entry name" value="YbjQ_1"/>
    <property type="match status" value="1"/>
</dbReference>
<dbReference type="SUPFAM" id="SSF117782">
    <property type="entry name" value="YbjQ-like"/>
    <property type="match status" value="1"/>
</dbReference>
<reference key="1">
    <citation type="journal article" date="2001" name="Nature">
        <title>Complete genome sequence of a multiple drug resistant Salmonella enterica serovar Typhi CT18.</title>
        <authorList>
            <person name="Parkhill J."/>
            <person name="Dougan G."/>
            <person name="James K.D."/>
            <person name="Thomson N.R."/>
            <person name="Pickard D."/>
            <person name="Wain J."/>
            <person name="Churcher C.M."/>
            <person name="Mungall K.L."/>
            <person name="Bentley S.D."/>
            <person name="Holden M.T.G."/>
            <person name="Sebaihia M."/>
            <person name="Baker S."/>
            <person name="Basham D."/>
            <person name="Brooks K."/>
            <person name="Chillingworth T."/>
            <person name="Connerton P."/>
            <person name="Cronin A."/>
            <person name="Davis P."/>
            <person name="Davies R.M."/>
            <person name="Dowd L."/>
            <person name="White N."/>
            <person name="Farrar J."/>
            <person name="Feltwell T."/>
            <person name="Hamlin N."/>
            <person name="Haque A."/>
            <person name="Hien T.T."/>
            <person name="Holroyd S."/>
            <person name="Jagels K."/>
            <person name="Krogh A."/>
            <person name="Larsen T.S."/>
            <person name="Leather S."/>
            <person name="Moule S."/>
            <person name="O'Gaora P."/>
            <person name="Parry C."/>
            <person name="Quail M.A."/>
            <person name="Rutherford K.M."/>
            <person name="Simmonds M."/>
            <person name="Skelton J."/>
            <person name="Stevens K."/>
            <person name="Whitehead S."/>
            <person name="Barrell B.G."/>
        </authorList>
    </citation>
    <scope>NUCLEOTIDE SEQUENCE [LARGE SCALE GENOMIC DNA]</scope>
    <source>
        <strain>CT18</strain>
    </source>
</reference>
<reference key="2">
    <citation type="journal article" date="2003" name="J. Bacteriol.">
        <title>Comparative genomics of Salmonella enterica serovar Typhi strains Ty2 and CT18.</title>
        <authorList>
            <person name="Deng W."/>
            <person name="Liou S.-R."/>
            <person name="Plunkett G. III"/>
            <person name="Mayhew G.F."/>
            <person name="Rose D.J."/>
            <person name="Burland V."/>
            <person name="Kodoyianni V."/>
            <person name="Schwartz D.C."/>
            <person name="Blattner F.R."/>
        </authorList>
    </citation>
    <scope>NUCLEOTIDE SEQUENCE [LARGE SCALE GENOMIC DNA]</scope>
    <source>
        <strain>ATCC 700931 / Ty2</strain>
    </source>
</reference>
<sequence>MQFSTTPTLEGQSIVEYCGVVTGEAILGANIFRDFFAGIRDIVGGRSGAYEKELRKAREIAFQELGEQAKALGADAVVGIDIDYETVGKDGSMLMVSVSGTAVKTRR</sequence>
<comment type="similarity">
    <text evidence="1">Belongs to the UPF0145 family.</text>
</comment>